<comment type="function">
    <text evidence="1">Catalyzes the interconversion of methylthioribose-1-phosphate (MTR-1-P) into methylthioribulose-1-phosphate (MTRu-1-P).</text>
</comment>
<comment type="catalytic activity">
    <reaction evidence="1">
        <text>5-(methylsulfanyl)-alpha-D-ribose 1-phosphate = 5-(methylsulfanyl)-D-ribulose 1-phosphate</text>
        <dbReference type="Rhea" id="RHEA:19989"/>
        <dbReference type="ChEBI" id="CHEBI:58533"/>
        <dbReference type="ChEBI" id="CHEBI:58548"/>
        <dbReference type="EC" id="5.3.1.23"/>
    </reaction>
</comment>
<comment type="pathway">
    <text evidence="1">Amino-acid biosynthesis; L-methionine biosynthesis via salvage pathway; L-methionine from S-methyl-5-thio-alpha-D-ribose 1-phosphate: step 1/6.</text>
</comment>
<comment type="similarity">
    <text evidence="2">Belongs to the eIF-2B alpha/beta/delta subunits family. MtnA subfamily.</text>
</comment>
<gene>
    <name evidence="1" type="primary">mtnA</name>
    <name type="ordered locus">LEPBI_I2926</name>
</gene>
<reference key="1">
    <citation type="journal article" date="2008" name="PLoS ONE">
        <title>Genome sequence of the saprophyte Leptospira biflexa provides insights into the evolution of Leptospira and the pathogenesis of leptospirosis.</title>
        <authorList>
            <person name="Picardeau M."/>
            <person name="Bulach D.M."/>
            <person name="Bouchier C."/>
            <person name="Zuerner R.L."/>
            <person name="Zidane N."/>
            <person name="Wilson P.J."/>
            <person name="Creno S."/>
            <person name="Kuczek E.S."/>
            <person name="Bommezzadri S."/>
            <person name="Davis J.C."/>
            <person name="McGrath A."/>
            <person name="Johnson M.J."/>
            <person name="Boursaux-Eude C."/>
            <person name="Seemann T."/>
            <person name="Rouy Z."/>
            <person name="Coppel R.L."/>
            <person name="Rood J.I."/>
            <person name="Lajus A."/>
            <person name="Davies J.K."/>
            <person name="Medigue C."/>
            <person name="Adler B."/>
        </authorList>
    </citation>
    <scope>NUCLEOTIDE SEQUENCE [LARGE SCALE GENOMIC DNA]</scope>
    <source>
        <strain>Patoc 1 / ATCC 23582 / Paris</strain>
    </source>
</reference>
<organism>
    <name type="scientific">Leptospira biflexa serovar Patoc (strain Patoc 1 / ATCC 23582 / Paris)</name>
    <dbReference type="NCBI Taxonomy" id="456481"/>
    <lineage>
        <taxon>Bacteria</taxon>
        <taxon>Pseudomonadati</taxon>
        <taxon>Spirochaetota</taxon>
        <taxon>Spirochaetia</taxon>
        <taxon>Leptospirales</taxon>
        <taxon>Leptospiraceae</taxon>
        <taxon>Leptospira</taxon>
    </lineage>
</organism>
<keyword id="KW-0028">Amino-acid biosynthesis</keyword>
<keyword id="KW-0413">Isomerase</keyword>
<keyword id="KW-0486">Methionine biosynthesis</keyword>
<keyword id="KW-1185">Reference proteome</keyword>
<feature type="chain" id="PRO_0000357199" description="Methylthioribose-1-phosphate isomerase">
    <location>
        <begin position="1"/>
        <end position="357"/>
    </location>
</feature>
<feature type="active site" description="Proton donor" evidence="1">
    <location>
        <position position="238"/>
    </location>
</feature>
<feature type="binding site" evidence="1">
    <location>
        <begin position="49"/>
        <end position="51"/>
    </location>
    <ligand>
        <name>substrate</name>
    </ligand>
</feature>
<feature type="binding site" evidence="1">
    <location>
        <position position="89"/>
    </location>
    <ligand>
        <name>substrate</name>
    </ligand>
</feature>
<feature type="binding site" evidence="1">
    <location>
        <position position="197"/>
    </location>
    <ligand>
        <name>substrate</name>
    </ligand>
</feature>
<feature type="binding site" evidence="1">
    <location>
        <begin position="248"/>
        <end position="249"/>
    </location>
    <ligand>
        <name>substrate</name>
    </ligand>
</feature>
<feature type="site" description="Transition state stabilizer" evidence="1">
    <location>
        <position position="158"/>
    </location>
</feature>
<proteinExistence type="inferred from homology"/>
<dbReference type="EC" id="5.3.1.23" evidence="1"/>
<dbReference type="EMBL" id="CP000786">
    <property type="protein sequence ID" value="ABZ98995.1"/>
    <property type="molecule type" value="Genomic_DNA"/>
</dbReference>
<dbReference type="RefSeq" id="WP_012389853.1">
    <property type="nucleotide sequence ID" value="NC_010602.1"/>
</dbReference>
<dbReference type="SMR" id="B0SNY3"/>
<dbReference type="STRING" id="456481.LEPBI_I2926"/>
<dbReference type="KEGG" id="lbi:LEPBI_I2926"/>
<dbReference type="HOGENOM" id="CLU_016218_1_2_12"/>
<dbReference type="OrthoDB" id="9803436at2"/>
<dbReference type="BioCyc" id="LBIF456481:LEPBI_RS14345-MONOMER"/>
<dbReference type="UniPathway" id="UPA00904">
    <property type="reaction ID" value="UER00874"/>
</dbReference>
<dbReference type="Proteomes" id="UP000001847">
    <property type="component" value="Chromosome I"/>
</dbReference>
<dbReference type="GO" id="GO:0046523">
    <property type="term" value="F:S-methyl-5-thioribose-1-phosphate isomerase activity"/>
    <property type="evidence" value="ECO:0007669"/>
    <property type="project" value="UniProtKB-UniRule"/>
</dbReference>
<dbReference type="GO" id="GO:0019509">
    <property type="term" value="P:L-methionine salvage from methylthioadenosine"/>
    <property type="evidence" value="ECO:0007669"/>
    <property type="project" value="UniProtKB-UniRule"/>
</dbReference>
<dbReference type="FunFam" id="1.20.120.420:FF:000003">
    <property type="entry name" value="Methylthioribose-1-phosphate isomerase"/>
    <property type="match status" value="1"/>
</dbReference>
<dbReference type="FunFam" id="3.40.50.10470:FF:000006">
    <property type="entry name" value="Methylthioribose-1-phosphate isomerase"/>
    <property type="match status" value="1"/>
</dbReference>
<dbReference type="Gene3D" id="1.20.120.420">
    <property type="entry name" value="translation initiation factor eif-2b, domain 1"/>
    <property type="match status" value="1"/>
</dbReference>
<dbReference type="Gene3D" id="3.40.50.10470">
    <property type="entry name" value="Translation initiation factor eif-2b, domain 2"/>
    <property type="match status" value="1"/>
</dbReference>
<dbReference type="HAMAP" id="MF_01678">
    <property type="entry name" value="Salvage_MtnA"/>
    <property type="match status" value="1"/>
</dbReference>
<dbReference type="InterPro" id="IPR000649">
    <property type="entry name" value="IF-2B-related"/>
</dbReference>
<dbReference type="InterPro" id="IPR005251">
    <property type="entry name" value="IF-M1Pi"/>
</dbReference>
<dbReference type="InterPro" id="IPR042529">
    <property type="entry name" value="IF_2B-like_C"/>
</dbReference>
<dbReference type="InterPro" id="IPR011559">
    <property type="entry name" value="Initiation_fac_2B_a/b/d"/>
</dbReference>
<dbReference type="InterPro" id="IPR027363">
    <property type="entry name" value="M1Pi_N"/>
</dbReference>
<dbReference type="InterPro" id="IPR037171">
    <property type="entry name" value="NagB/RpiA_transferase-like"/>
</dbReference>
<dbReference type="InterPro" id="IPR001763">
    <property type="entry name" value="Rhodanese-like_dom"/>
</dbReference>
<dbReference type="NCBIfam" id="TIGR00524">
    <property type="entry name" value="eIF-2B_rel"/>
    <property type="match status" value="1"/>
</dbReference>
<dbReference type="NCBIfam" id="NF004326">
    <property type="entry name" value="PRK05720.1"/>
    <property type="match status" value="1"/>
</dbReference>
<dbReference type="NCBIfam" id="TIGR00512">
    <property type="entry name" value="salvage_mtnA"/>
    <property type="match status" value="1"/>
</dbReference>
<dbReference type="PANTHER" id="PTHR43475">
    <property type="entry name" value="METHYLTHIORIBOSE-1-PHOSPHATE ISOMERASE"/>
    <property type="match status" value="1"/>
</dbReference>
<dbReference type="PANTHER" id="PTHR43475:SF1">
    <property type="entry name" value="METHYLTHIORIBOSE-1-PHOSPHATE ISOMERASE"/>
    <property type="match status" value="1"/>
</dbReference>
<dbReference type="Pfam" id="PF01008">
    <property type="entry name" value="IF-2B"/>
    <property type="match status" value="1"/>
</dbReference>
<dbReference type="SUPFAM" id="SSF100950">
    <property type="entry name" value="NagB/RpiA/CoA transferase-like"/>
    <property type="match status" value="1"/>
</dbReference>
<name>MTNA_LEPBP</name>
<accession>B0SNY3</accession>
<protein>
    <recommendedName>
        <fullName evidence="1">Methylthioribose-1-phosphate isomerase</fullName>
        <shortName evidence="1">M1Pi</shortName>
        <shortName evidence="1">MTR-1-P isomerase</shortName>
        <ecNumber evidence="1">5.3.1.23</ecNumber>
    </recommendedName>
    <alternativeName>
        <fullName evidence="1">S-methyl-5-thioribose-1-phosphate isomerase</fullName>
    </alternativeName>
</protein>
<evidence type="ECO:0000255" key="1">
    <source>
        <dbReference type="HAMAP-Rule" id="MF_01678"/>
    </source>
</evidence>
<evidence type="ECO:0000305" key="2"/>
<sequence>MSQPEFLPIQWKSTFLSLLDQRVLPGKKEFLQIQTMEETIVAIREMAVRGAPAIAITGIFGITLGAKKKSGNSNPVDVDSLIKQVFESRPTAVNLSFALKEAKKRVEGVSHWDSIAKVWESYALEMMVQDLKANQTLGKNGADLFPKNQNEFHIITHCNTGALATAGHGTALGVIRSLRDQGKKVVVYADETRPFLQGSRLTAFEMMEEGIECYIITDGMSGWLMNHRKIDAVLVGCDRVATNGDTANKIGTYNLAIVAYEHKVPFYVCATKDSFDLKLKTGDEIPIEMRKESEVTQFDFLKNEEGNFLFPEGKTSPIGARALNPSFDITKAKFIKNFITELGCFVPEEISFRLKNV</sequence>